<sequence>MELNIKMDRSKELFEESKKYLVGGVNSPVRLFKPFPFFVKSAKDCFLYDEDGNEFIDYCLAYGPMVLGHANENILNAVKSQMDLGTAYGVPSEKEITLAKEVINRIPCAEMVRFVNSGTEATMGAIRLARGVTKRNKIIKFEGAFHGAHDYVLVKTGSGALTHGAPNSPGIPEDTTKNTLLIPFNDEEAVRKVISENKEEIACIILEPVMGNVGCIPPKDGYLQFLREITEENGILLIFDEVITGFRLSKGGAQEYYGIKSDLATVGKILGGGFPIGAITGKKEYMEQFSPNGQIYQAGTFNGNPISVTAGIETLKNLDDKFYKETTKKAGILSNCLRETAEKYNIPAKVYNVASIFQVYFNDKEIVTYEDAKSSDTEKFMKYFYTLLENGVFVAPSQFECCFTSIKHNDEVLEKTMNAIDIAMKKL</sequence>
<accession>Q6M0P5</accession>
<organism>
    <name type="scientific">Methanococcus maripaludis (strain DSM 14266 / JCM 13030 / NBRC 101832 / S2 / LL)</name>
    <dbReference type="NCBI Taxonomy" id="267377"/>
    <lineage>
        <taxon>Archaea</taxon>
        <taxon>Methanobacteriati</taxon>
        <taxon>Methanobacteriota</taxon>
        <taxon>Methanomada group</taxon>
        <taxon>Methanococci</taxon>
        <taxon>Methanococcales</taxon>
        <taxon>Methanococcaceae</taxon>
        <taxon>Methanococcus</taxon>
    </lineage>
</organism>
<proteinExistence type="inferred from homology"/>
<name>GSA_METMP</name>
<gene>
    <name evidence="1" type="primary">hemL</name>
    <name type="ordered locus">MMP0224</name>
</gene>
<comment type="catalytic activity">
    <reaction evidence="1">
        <text>(S)-4-amino-5-oxopentanoate = 5-aminolevulinate</text>
        <dbReference type="Rhea" id="RHEA:14265"/>
        <dbReference type="ChEBI" id="CHEBI:57501"/>
        <dbReference type="ChEBI" id="CHEBI:356416"/>
        <dbReference type="EC" id="5.4.3.8"/>
    </reaction>
</comment>
<comment type="cofactor">
    <cofactor evidence="1">
        <name>pyridoxal 5'-phosphate</name>
        <dbReference type="ChEBI" id="CHEBI:597326"/>
    </cofactor>
</comment>
<comment type="pathway">
    <text evidence="1">Porphyrin-containing compound metabolism; protoporphyrin-IX biosynthesis; 5-aminolevulinate from L-glutamyl-tRNA(Glu): step 2/2.</text>
</comment>
<comment type="subcellular location">
    <subcellularLocation>
        <location evidence="1">Cytoplasm</location>
    </subcellularLocation>
</comment>
<comment type="similarity">
    <text evidence="1">Belongs to the class-III pyridoxal-phosphate-dependent aminotransferase family. HemL subfamily.</text>
</comment>
<dbReference type="EC" id="5.4.3.8" evidence="1"/>
<dbReference type="EMBL" id="BX950229">
    <property type="protein sequence ID" value="CAF29780.1"/>
    <property type="molecule type" value="Genomic_DNA"/>
</dbReference>
<dbReference type="RefSeq" id="WP_011170168.1">
    <property type="nucleotide sequence ID" value="NC_005791.1"/>
</dbReference>
<dbReference type="SMR" id="Q6M0P5"/>
<dbReference type="STRING" id="267377.MMP0224"/>
<dbReference type="EnsemblBacteria" id="CAF29780">
    <property type="protein sequence ID" value="CAF29780"/>
    <property type="gene ID" value="MMP0224"/>
</dbReference>
<dbReference type="GeneID" id="2762601"/>
<dbReference type="KEGG" id="mmp:MMP0224"/>
<dbReference type="PATRIC" id="fig|267377.15.peg.226"/>
<dbReference type="eggNOG" id="arCOG00918">
    <property type="taxonomic scope" value="Archaea"/>
</dbReference>
<dbReference type="HOGENOM" id="CLU_016922_1_5_2"/>
<dbReference type="OrthoDB" id="6524at2157"/>
<dbReference type="UniPathway" id="UPA00251">
    <property type="reaction ID" value="UER00317"/>
</dbReference>
<dbReference type="Proteomes" id="UP000000590">
    <property type="component" value="Chromosome"/>
</dbReference>
<dbReference type="GO" id="GO:0005737">
    <property type="term" value="C:cytoplasm"/>
    <property type="evidence" value="ECO:0007669"/>
    <property type="project" value="UniProtKB-SubCell"/>
</dbReference>
<dbReference type="GO" id="GO:0042286">
    <property type="term" value="F:glutamate-1-semialdehyde 2,1-aminomutase activity"/>
    <property type="evidence" value="ECO:0007669"/>
    <property type="project" value="UniProtKB-UniRule"/>
</dbReference>
<dbReference type="GO" id="GO:0030170">
    <property type="term" value="F:pyridoxal phosphate binding"/>
    <property type="evidence" value="ECO:0007669"/>
    <property type="project" value="InterPro"/>
</dbReference>
<dbReference type="GO" id="GO:0008483">
    <property type="term" value="F:transaminase activity"/>
    <property type="evidence" value="ECO:0007669"/>
    <property type="project" value="InterPro"/>
</dbReference>
<dbReference type="GO" id="GO:0006782">
    <property type="term" value="P:protoporphyrinogen IX biosynthetic process"/>
    <property type="evidence" value="ECO:0007669"/>
    <property type="project" value="UniProtKB-UniRule"/>
</dbReference>
<dbReference type="CDD" id="cd00610">
    <property type="entry name" value="OAT_like"/>
    <property type="match status" value="1"/>
</dbReference>
<dbReference type="FunFam" id="3.40.640.10:FF:000021">
    <property type="entry name" value="Glutamate-1-semialdehyde 2,1-aminomutase"/>
    <property type="match status" value="1"/>
</dbReference>
<dbReference type="Gene3D" id="3.90.1150.10">
    <property type="entry name" value="Aspartate Aminotransferase, domain 1"/>
    <property type="match status" value="1"/>
</dbReference>
<dbReference type="Gene3D" id="3.40.640.10">
    <property type="entry name" value="Type I PLP-dependent aspartate aminotransferase-like (Major domain)"/>
    <property type="match status" value="1"/>
</dbReference>
<dbReference type="HAMAP" id="MF_00375">
    <property type="entry name" value="HemL_aminotrans_3"/>
    <property type="match status" value="1"/>
</dbReference>
<dbReference type="InterPro" id="IPR004639">
    <property type="entry name" value="4pyrrol_synth_GluAld_NH2Trfase"/>
</dbReference>
<dbReference type="InterPro" id="IPR005814">
    <property type="entry name" value="Aminotrans_3"/>
</dbReference>
<dbReference type="InterPro" id="IPR049704">
    <property type="entry name" value="Aminotrans_3_PPA_site"/>
</dbReference>
<dbReference type="InterPro" id="IPR015424">
    <property type="entry name" value="PyrdxlP-dep_Trfase"/>
</dbReference>
<dbReference type="InterPro" id="IPR015421">
    <property type="entry name" value="PyrdxlP-dep_Trfase_major"/>
</dbReference>
<dbReference type="InterPro" id="IPR015422">
    <property type="entry name" value="PyrdxlP-dep_Trfase_small"/>
</dbReference>
<dbReference type="NCBIfam" id="TIGR00713">
    <property type="entry name" value="hemL"/>
    <property type="match status" value="1"/>
</dbReference>
<dbReference type="NCBIfam" id="NF000818">
    <property type="entry name" value="PRK00062.1"/>
    <property type="match status" value="1"/>
</dbReference>
<dbReference type="PANTHER" id="PTHR43713">
    <property type="entry name" value="GLUTAMATE-1-SEMIALDEHYDE 2,1-AMINOMUTASE"/>
    <property type="match status" value="1"/>
</dbReference>
<dbReference type="PANTHER" id="PTHR43713:SF3">
    <property type="entry name" value="GLUTAMATE-1-SEMIALDEHYDE 2,1-AMINOMUTASE 1, CHLOROPLASTIC-RELATED"/>
    <property type="match status" value="1"/>
</dbReference>
<dbReference type="Pfam" id="PF00202">
    <property type="entry name" value="Aminotran_3"/>
    <property type="match status" value="1"/>
</dbReference>
<dbReference type="SUPFAM" id="SSF53383">
    <property type="entry name" value="PLP-dependent transferases"/>
    <property type="match status" value="1"/>
</dbReference>
<dbReference type="PROSITE" id="PS00600">
    <property type="entry name" value="AA_TRANSFER_CLASS_3"/>
    <property type="match status" value="1"/>
</dbReference>
<reference key="1">
    <citation type="journal article" date="2004" name="J. Bacteriol.">
        <title>Complete genome sequence of the genetically tractable hydrogenotrophic methanogen Methanococcus maripaludis.</title>
        <authorList>
            <person name="Hendrickson E.L."/>
            <person name="Kaul R."/>
            <person name="Zhou Y."/>
            <person name="Bovee D."/>
            <person name="Chapman P."/>
            <person name="Chung J."/>
            <person name="Conway de Macario E."/>
            <person name="Dodsworth J.A."/>
            <person name="Gillett W."/>
            <person name="Graham D.E."/>
            <person name="Hackett M."/>
            <person name="Haydock A.K."/>
            <person name="Kang A."/>
            <person name="Land M.L."/>
            <person name="Levy R."/>
            <person name="Lie T.J."/>
            <person name="Major T.A."/>
            <person name="Moore B.C."/>
            <person name="Porat I."/>
            <person name="Palmeiri A."/>
            <person name="Rouse G."/>
            <person name="Saenphimmachak C."/>
            <person name="Soell D."/>
            <person name="Van Dien S."/>
            <person name="Wang T."/>
            <person name="Whitman W.B."/>
            <person name="Xia Q."/>
            <person name="Zhang Y."/>
            <person name="Larimer F.W."/>
            <person name="Olson M.V."/>
            <person name="Leigh J.A."/>
        </authorList>
    </citation>
    <scope>NUCLEOTIDE SEQUENCE [LARGE SCALE GENOMIC DNA]</scope>
    <source>
        <strain>DSM 14266 / JCM 13030 / NBRC 101832 / S2 / LL</strain>
    </source>
</reference>
<keyword id="KW-0963">Cytoplasm</keyword>
<keyword id="KW-0413">Isomerase</keyword>
<keyword id="KW-0627">Porphyrin biosynthesis</keyword>
<keyword id="KW-0663">Pyridoxal phosphate</keyword>
<keyword id="KW-1185">Reference proteome</keyword>
<evidence type="ECO:0000255" key="1">
    <source>
        <dbReference type="HAMAP-Rule" id="MF_00375"/>
    </source>
</evidence>
<feature type="chain" id="PRO_0000120485" description="Glutamate-1-semialdehyde 2,1-aminomutase">
    <location>
        <begin position="1"/>
        <end position="427"/>
    </location>
</feature>
<feature type="modified residue" description="N6-(pyridoxal phosphate)lysine" evidence="1">
    <location>
        <position position="268"/>
    </location>
</feature>
<protein>
    <recommendedName>
        <fullName evidence="1">Glutamate-1-semialdehyde 2,1-aminomutase</fullName>
        <shortName evidence="1">GSA</shortName>
        <ecNumber evidence="1">5.4.3.8</ecNumber>
    </recommendedName>
    <alternativeName>
        <fullName evidence="1">Glutamate-1-semialdehyde aminotransferase</fullName>
        <shortName evidence="1">GSA-AT</shortName>
    </alternativeName>
</protein>